<keyword id="KW-0687">Ribonucleoprotein</keyword>
<keyword id="KW-0689">Ribosomal protein</keyword>
<keyword id="KW-0694">RNA-binding</keyword>
<keyword id="KW-0699">rRNA-binding</keyword>
<dbReference type="EMBL" id="CP001283">
    <property type="protein sequence ID" value="ACK90004.1"/>
    <property type="molecule type" value="Genomic_DNA"/>
</dbReference>
<dbReference type="RefSeq" id="WP_000101799.1">
    <property type="nucleotide sequence ID" value="NC_011773.1"/>
</dbReference>
<dbReference type="SMR" id="B7JKE6"/>
<dbReference type="GeneID" id="93010917"/>
<dbReference type="KEGG" id="bcu:BCAH820_0149"/>
<dbReference type="HOGENOM" id="CLU_072439_5_0_9"/>
<dbReference type="Proteomes" id="UP000001363">
    <property type="component" value="Chromosome"/>
</dbReference>
<dbReference type="GO" id="GO:1990904">
    <property type="term" value="C:ribonucleoprotein complex"/>
    <property type="evidence" value="ECO:0007669"/>
    <property type="project" value="UniProtKB-KW"/>
</dbReference>
<dbReference type="GO" id="GO:0005840">
    <property type="term" value="C:ribosome"/>
    <property type="evidence" value="ECO:0007669"/>
    <property type="project" value="UniProtKB-KW"/>
</dbReference>
<dbReference type="GO" id="GO:0019843">
    <property type="term" value="F:rRNA binding"/>
    <property type="evidence" value="ECO:0007669"/>
    <property type="project" value="UniProtKB-UniRule"/>
</dbReference>
<dbReference type="GO" id="GO:0003735">
    <property type="term" value="F:structural constituent of ribosome"/>
    <property type="evidence" value="ECO:0007669"/>
    <property type="project" value="InterPro"/>
</dbReference>
<dbReference type="GO" id="GO:0006412">
    <property type="term" value="P:translation"/>
    <property type="evidence" value="ECO:0007669"/>
    <property type="project" value="UniProtKB-UniRule"/>
</dbReference>
<dbReference type="FunFam" id="3.30.420.80:FF:000001">
    <property type="entry name" value="30S ribosomal protein S11"/>
    <property type="match status" value="1"/>
</dbReference>
<dbReference type="Gene3D" id="3.30.420.80">
    <property type="entry name" value="Ribosomal protein S11"/>
    <property type="match status" value="1"/>
</dbReference>
<dbReference type="HAMAP" id="MF_01310">
    <property type="entry name" value="Ribosomal_uS11"/>
    <property type="match status" value="1"/>
</dbReference>
<dbReference type="InterPro" id="IPR001971">
    <property type="entry name" value="Ribosomal_uS11"/>
</dbReference>
<dbReference type="InterPro" id="IPR019981">
    <property type="entry name" value="Ribosomal_uS11_bac-type"/>
</dbReference>
<dbReference type="InterPro" id="IPR018102">
    <property type="entry name" value="Ribosomal_uS11_CS"/>
</dbReference>
<dbReference type="InterPro" id="IPR036967">
    <property type="entry name" value="Ribosomal_uS11_sf"/>
</dbReference>
<dbReference type="NCBIfam" id="NF003698">
    <property type="entry name" value="PRK05309.1"/>
    <property type="match status" value="1"/>
</dbReference>
<dbReference type="NCBIfam" id="TIGR03632">
    <property type="entry name" value="uS11_bact"/>
    <property type="match status" value="1"/>
</dbReference>
<dbReference type="PANTHER" id="PTHR11759">
    <property type="entry name" value="40S RIBOSOMAL PROTEIN S14/30S RIBOSOMAL PROTEIN S11"/>
    <property type="match status" value="1"/>
</dbReference>
<dbReference type="Pfam" id="PF00411">
    <property type="entry name" value="Ribosomal_S11"/>
    <property type="match status" value="1"/>
</dbReference>
<dbReference type="PIRSF" id="PIRSF002131">
    <property type="entry name" value="Ribosomal_S11"/>
    <property type="match status" value="1"/>
</dbReference>
<dbReference type="SUPFAM" id="SSF53137">
    <property type="entry name" value="Translational machinery components"/>
    <property type="match status" value="1"/>
</dbReference>
<dbReference type="PROSITE" id="PS00054">
    <property type="entry name" value="RIBOSOMAL_S11"/>
    <property type="match status" value="1"/>
</dbReference>
<feature type="chain" id="PRO_1000141051" description="Small ribosomal subunit protein uS11">
    <location>
        <begin position="1"/>
        <end position="129"/>
    </location>
</feature>
<evidence type="ECO:0000255" key="1">
    <source>
        <dbReference type="HAMAP-Rule" id="MF_01310"/>
    </source>
</evidence>
<evidence type="ECO:0000305" key="2"/>
<accession>B7JKE6</accession>
<gene>
    <name evidence="1" type="primary">rpsK</name>
    <name type="ordered locus">BCAH820_0149</name>
</gene>
<protein>
    <recommendedName>
        <fullName evidence="1">Small ribosomal subunit protein uS11</fullName>
    </recommendedName>
    <alternativeName>
        <fullName evidence="2">30S ribosomal protein S11</fullName>
    </alternativeName>
</protein>
<sequence>MARKTNTRKKRVKKNIEAGVAHIRSTFNNTIVTLTDTHGNALSWSSAGALGFRGSRKSTPFAAQMAAETAAKAAMEHGLKTLEVTVKGPGAGREAAIRALQAAGLEVTAIRDVTPVPHNGCRPPKRRRV</sequence>
<organism>
    <name type="scientific">Bacillus cereus (strain AH820)</name>
    <dbReference type="NCBI Taxonomy" id="405535"/>
    <lineage>
        <taxon>Bacteria</taxon>
        <taxon>Bacillati</taxon>
        <taxon>Bacillota</taxon>
        <taxon>Bacilli</taxon>
        <taxon>Bacillales</taxon>
        <taxon>Bacillaceae</taxon>
        <taxon>Bacillus</taxon>
        <taxon>Bacillus cereus group</taxon>
    </lineage>
</organism>
<reference key="1">
    <citation type="submission" date="2008-10" db="EMBL/GenBank/DDBJ databases">
        <title>Genome sequence of Bacillus cereus AH820.</title>
        <authorList>
            <person name="Dodson R.J."/>
            <person name="Durkin A.S."/>
            <person name="Rosovitz M.J."/>
            <person name="Rasko D.A."/>
            <person name="Hoffmaster A."/>
            <person name="Ravel J."/>
            <person name="Sutton G."/>
        </authorList>
    </citation>
    <scope>NUCLEOTIDE SEQUENCE [LARGE SCALE GENOMIC DNA]</scope>
    <source>
        <strain>AH820</strain>
    </source>
</reference>
<name>RS11_BACC0</name>
<proteinExistence type="inferred from homology"/>
<comment type="function">
    <text evidence="1">Located on the platform of the 30S subunit, it bridges several disparate RNA helices of the 16S rRNA. Forms part of the Shine-Dalgarno cleft in the 70S ribosome.</text>
</comment>
<comment type="subunit">
    <text evidence="1">Part of the 30S ribosomal subunit. Interacts with proteins S7 and S18. Binds to IF-3.</text>
</comment>
<comment type="similarity">
    <text evidence="1">Belongs to the universal ribosomal protein uS11 family.</text>
</comment>